<organism>
    <name type="scientific">Streptococcus pyogenes serotype M12 (strain MGAS9429)</name>
    <dbReference type="NCBI Taxonomy" id="370551"/>
    <lineage>
        <taxon>Bacteria</taxon>
        <taxon>Bacillati</taxon>
        <taxon>Bacillota</taxon>
        <taxon>Bacilli</taxon>
        <taxon>Lactobacillales</taxon>
        <taxon>Streptococcaceae</taxon>
        <taxon>Streptococcus</taxon>
    </lineage>
</organism>
<sequence>MIVGHGIDLQEISAIEKVYQRNPRFAQKILTEQELAIFESFPYKRRLSYLAGRWSGKEAFVKAIGTGIGRLTFQDIEILNDVRGCPILTKSPFKGNSFISISHSGNYVQASVILEDKK</sequence>
<gene>
    <name evidence="1" type="primary">acpS</name>
    <name type="ordered locus">MGAS9429_Spy1537</name>
</gene>
<keyword id="KW-0963">Cytoplasm</keyword>
<keyword id="KW-0275">Fatty acid biosynthesis</keyword>
<keyword id="KW-0276">Fatty acid metabolism</keyword>
<keyword id="KW-0444">Lipid biosynthesis</keyword>
<keyword id="KW-0443">Lipid metabolism</keyword>
<keyword id="KW-0460">Magnesium</keyword>
<keyword id="KW-0479">Metal-binding</keyword>
<keyword id="KW-0808">Transferase</keyword>
<dbReference type="EC" id="2.7.8.7" evidence="1"/>
<dbReference type="EMBL" id="CP000259">
    <property type="protein sequence ID" value="ABF32724.1"/>
    <property type="molecule type" value="Genomic_DNA"/>
</dbReference>
<dbReference type="RefSeq" id="WP_002988526.1">
    <property type="nucleotide sequence ID" value="NC_008021.1"/>
</dbReference>
<dbReference type="SMR" id="Q1JK99"/>
<dbReference type="KEGG" id="spk:MGAS9429_Spy1537"/>
<dbReference type="HOGENOM" id="CLU_089696_1_2_9"/>
<dbReference type="Proteomes" id="UP000002433">
    <property type="component" value="Chromosome"/>
</dbReference>
<dbReference type="GO" id="GO:0005737">
    <property type="term" value="C:cytoplasm"/>
    <property type="evidence" value="ECO:0007669"/>
    <property type="project" value="UniProtKB-SubCell"/>
</dbReference>
<dbReference type="GO" id="GO:0008897">
    <property type="term" value="F:holo-[acyl-carrier-protein] synthase activity"/>
    <property type="evidence" value="ECO:0007669"/>
    <property type="project" value="UniProtKB-UniRule"/>
</dbReference>
<dbReference type="GO" id="GO:0000287">
    <property type="term" value="F:magnesium ion binding"/>
    <property type="evidence" value="ECO:0007669"/>
    <property type="project" value="UniProtKB-UniRule"/>
</dbReference>
<dbReference type="GO" id="GO:0006633">
    <property type="term" value="P:fatty acid biosynthetic process"/>
    <property type="evidence" value="ECO:0007669"/>
    <property type="project" value="UniProtKB-UniRule"/>
</dbReference>
<dbReference type="Gene3D" id="3.90.470.20">
    <property type="entry name" value="4'-phosphopantetheinyl transferase domain"/>
    <property type="match status" value="1"/>
</dbReference>
<dbReference type="HAMAP" id="MF_00101">
    <property type="entry name" value="AcpS"/>
    <property type="match status" value="1"/>
</dbReference>
<dbReference type="InterPro" id="IPR008278">
    <property type="entry name" value="4-PPantetheinyl_Trfase_dom"/>
</dbReference>
<dbReference type="InterPro" id="IPR037143">
    <property type="entry name" value="4-PPantetheinyl_Trfase_dom_sf"/>
</dbReference>
<dbReference type="InterPro" id="IPR002582">
    <property type="entry name" value="ACPS"/>
</dbReference>
<dbReference type="InterPro" id="IPR004568">
    <property type="entry name" value="Ppantetheine-prot_Trfase_dom"/>
</dbReference>
<dbReference type="NCBIfam" id="TIGR00516">
    <property type="entry name" value="acpS"/>
    <property type="match status" value="1"/>
</dbReference>
<dbReference type="NCBIfam" id="TIGR00556">
    <property type="entry name" value="pantethn_trn"/>
    <property type="match status" value="1"/>
</dbReference>
<dbReference type="Pfam" id="PF01648">
    <property type="entry name" value="ACPS"/>
    <property type="match status" value="1"/>
</dbReference>
<dbReference type="SUPFAM" id="SSF56214">
    <property type="entry name" value="4'-phosphopantetheinyl transferase"/>
    <property type="match status" value="1"/>
</dbReference>
<comment type="function">
    <text evidence="1">Transfers the 4'-phosphopantetheine moiety from coenzyme A to a Ser of acyl-carrier-protein.</text>
</comment>
<comment type="catalytic activity">
    <reaction evidence="1">
        <text>apo-[ACP] + CoA = holo-[ACP] + adenosine 3',5'-bisphosphate + H(+)</text>
        <dbReference type="Rhea" id="RHEA:12068"/>
        <dbReference type="Rhea" id="RHEA-COMP:9685"/>
        <dbReference type="Rhea" id="RHEA-COMP:9690"/>
        <dbReference type="ChEBI" id="CHEBI:15378"/>
        <dbReference type="ChEBI" id="CHEBI:29999"/>
        <dbReference type="ChEBI" id="CHEBI:57287"/>
        <dbReference type="ChEBI" id="CHEBI:58343"/>
        <dbReference type="ChEBI" id="CHEBI:64479"/>
        <dbReference type="EC" id="2.7.8.7"/>
    </reaction>
</comment>
<comment type="cofactor">
    <cofactor evidence="1">
        <name>Mg(2+)</name>
        <dbReference type="ChEBI" id="CHEBI:18420"/>
    </cofactor>
</comment>
<comment type="subcellular location">
    <subcellularLocation>
        <location evidence="1">Cytoplasm</location>
    </subcellularLocation>
</comment>
<comment type="similarity">
    <text evidence="1">Belongs to the P-Pant transferase superfamily. AcpS family.</text>
</comment>
<name>ACPS_STRPC</name>
<accession>Q1JK99</accession>
<feature type="chain" id="PRO_1000008511" description="Holo-[acyl-carrier-protein] synthase">
    <location>
        <begin position="1"/>
        <end position="118"/>
    </location>
</feature>
<feature type="binding site" evidence="1">
    <location>
        <position position="8"/>
    </location>
    <ligand>
        <name>Mg(2+)</name>
        <dbReference type="ChEBI" id="CHEBI:18420"/>
    </ligand>
</feature>
<feature type="binding site" evidence="1">
    <location>
        <position position="58"/>
    </location>
    <ligand>
        <name>Mg(2+)</name>
        <dbReference type="ChEBI" id="CHEBI:18420"/>
    </ligand>
</feature>
<evidence type="ECO:0000255" key="1">
    <source>
        <dbReference type="HAMAP-Rule" id="MF_00101"/>
    </source>
</evidence>
<protein>
    <recommendedName>
        <fullName evidence="1">Holo-[acyl-carrier-protein] synthase</fullName>
        <shortName evidence="1">Holo-ACP synthase</shortName>
        <ecNumber evidence="1">2.7.8.7</ecNumber>
    </recommendedName>
    <alternativeName>
        <fullName evidence="1">4'-phosphopantetheinyl transferase AcpS</fullName>
    </alternativeName>
</protein>
<proteinExistence type="inferred from homology"/>
<reference key="1">
    <citation type="journal article" date="2006" name="Proc. Natl. Acad. Sci. U.S.A.">
        <title>Molecular genetic anatomy of inter- and intraserotype variation in the human bacterial pathogen group A Streptococcus.</title>
        <authorList>
            <person name="Beres S.B."/>
            <person name="Richter E.W."/>
            <person name="Nagiec M.J."/>
            <person name="Sumby P."/>
            <person name="Porcella S.F."/>
            <person name="DeLeo F.R."/>
            <person name="Musser J.M."/>
        </authorList>
    </citation>
    <scope>NUCLEOTIDE SEQUENCE [LARGE SCALE GENOMIC DNA]</scope>
    <source>
        <strain>MGAS9429</strain>
    </source>
</reference>